<comment type="function">
    <text evidence="1">Part of the ABC transporter complex MetNIQ involved in methionine import. Responsible for energy coupling to the transport system.</text>
</comment>
<comment type="catalytic activity">
    <reaction evidence="1">
        <text>L-methionine(out) + ATP + H2O = L-methionine(in) + ADP + phosphate + H(+)</text>
        <dbReference type="Rhea" id="RHEA:29779"/>
        <dbReference type="ChEBI" id="CHEBI:15377"/>
        <dbReference type="ChEBI" id="CHEBI:15378"/>
        <dbReference type="ChEBI" id="CHEBI:30616"/>
        <dbReference type="ChEBI" id="CHEBI:43474"/>
        <dbReference type="ChEBI" id="CHEBI:57844"/>
        <dbReference type="ChEBI" id="CHEBI:456216"/>
        <dbReference type="EC" id="7.4.2.11"/>
    </reaction>
</comment>
<comment type="catalytic activity">
    <reaction evidence="1">
        <text>D-methionine(out) + ATP + H2O = D-methionine(in) + ADP + phosphate + H(+)</text>
        <dbReference type="Rhea" id="RHEA:29767"/>
        <dbReference type="ChEBI" id="CHEBI:15377"/>
        <dbReference type="ChEBI" id="CHEBI:15378"/>
        <dbReference type="ChEBI" id="CHEBI:30616"/>
        <dbReference type="ChEBI" id="CHEBI:43474"/>
        <dbReference type="ChEBI" id="CHEBI:57932"/>
        <dbReference type="ChEBI" id="CHEBI:456216"/>
        <dbReference type="EC" id="7.4.2.11"/>
    </reaction>
</comment>
<comment type="subunit">
    <text evidence="1">The complex is composed of two ATP-binding proteins (MetN), two transmembrane proteins (MetI) and a solute-binding protein (MetQ).</text>
</comment>
<comment type="subcellular location">
    <subcellularLocation>
        <location evidence="1">Cell inner membrane</location>
        <topology evidence="1">Peripheral membrane protein</topology>
    </subcellularLocation>
</comment>
<comment type="similarity">
    <text evidence="1">Belongs to the ABC transporter superfamily. Methionine importer (TC 3.A.1.24) family.</text>
</comment>
<evidence type="ECO:0000255" key="1">
    <source>
        <dbReference type="HAMAP-Rule" id="MF_01719"/>
    </source>
</evidence>
<protein>
    <recommendedName>
        <fullName evidence="1">Methionine import ATP-binding protein MetN</fullName>
        <ecNumber evidence="1">7.4.2.11</ecNumber>
    </recommendedName>
</protein>
<keyword id="KW-0029">Amino-acid transport</keyword>
<keyword id="KW-0067">ATP-binding</keyword>
<keyword id="KW-0997">Cell inner membrane</keyword>
<keyword id="KW-1003">Cell membrane</keyword>
<keyword id="KW-0472">Membrane</keyword>
<keyword id="KW-0547">Nucleotide-binding</keyword>
<keyword id="KW-1278">Translocase</keyword>
<keyword id="KW-0813">Transport</keyword>
<name>METN_SALEN</name>
<feature type="chain" id="PRO_0000270377" description="Methionine import ATP-binding protein MetN">
    <location>
        <begin position="1"/>
        <end position="315"/>
    </location>
</feature>
<feature type="domain" description="ABC transporter" evidence="1">
    <location>
        <begin position="2"/>
        <end position="219"/>
    </location>
</feature>
<feature type="binding site" evidence="1">
    <location>
        <begin position="16"/>
        <end position="23"/>
    </location>
    <ligand>
        <name>ATP</name>
        <dbReference type="ChEBI" id="CHEBI:30616"/>
    </ligand>
</feature>
<reference key="1">
    <citation type="journal article" date="1999" name="Mol. Microbiol.">
        <title>Identification and molecular characterization of a novel Salmonella enteritidis pathogenicity islet encoding an ABC transporter.</title>
        <authorList>
            <person name="Pattery T."/>
            <person name="Hernalsteens J.-P."/>
            <person name="De Greve H."/>
        </authorList>
    </citation>
    <scope>NUCLEOTIDE SEQUENCE [GENOMIC DNA]</scope>
    <source>
        <strain>S1400</strain>
    </source>
</reference>
<accession>Q9S4Z0</accession>
<sequence length="315" mass="34141">MIEIEKVCVDFTAGRGTSGAGKSTLLRTLNALTRPSQGRVNVNGVEISALDGKALRQARQRIGMIFQHFNLMHTRTVAQNVAFSLKAAGWERSKIAPRVAEILTLVGLADKANRFPVQLSGGQKQRVGIARAIANHPDVLLCDEPTSALDLETSATILALLRQINAQLGITIVLITHEMNVIKSICDRVAVMSGGKVVESGEVFDEFAHPQHAFTQQLVSHTLNLTLPERLREHLPGQLLKILFIGDSAEQPVLSEVAIKFGVAVNILHGKIEYIGERALGILVVQLTAPHNPTAVAAAVEHIRQRTAQVEVIRG</sequence>
<dbReference type="EC" id="7.4.2.11" evidence="1"/>
<dbReference type="EMBL" id="AF102556">
    <property type="protein sequence ID" value="AAD51880.1"/>
    <property type="molecule type" value="Genomic_DNA"/>
</dbReference>
<dbReference type="SMR" id="Q9S4Z0"/>
<dbReference type="GO" id="GO:0005886">
    <property type="term" value="C:plasma membrane"/>
    <property type="evidence" value="ECO:0007669"/>
    <property type="project" value="UniProtKB-SubCell"/>
</dbReference>
<dbReference type="GO" id="GO:0033232">
    <property type="term" value="F:ABC-type D-methionine transporter activity"/>
    <property type="evidence" value="ECO:0007669"/>
    <property type="project" value="UniProtKB-EC"/>
</dbReference>
<dbReference type="GO" id="GO:0005524">
    <property type="term" value="F:ATP binding"/>
    <property type="evidence" value="ECO:0007669"/>
    <property type="project" value="UniProtKB-KW"/>
</dbReference>
<dbReference type="GO" id="GO:0016887">
    <property type="term" value="F:ATP hydrolysis activity"/>
    <property type="evidence" value="ECO:0007669"/>
    <property type="project" value="InterPro"/>
</dbReference>
<dbReference type="Gene3D" id="3.30.70.260">
    <property type="match status" value="1"/>
</dbReference>
<dbReference type="Gene3D" id="3.40.50.300">
    <property type="entry name" value="P-loop containing nucleotide triphosphate hydrolases"/>
    <property type="match status" value="1"/>
</dbReference>
<dbReference type="InterPro" id="IPR003593">
    <property type="entry name" value="AAA+_ATPase"/>
</dbReference>
<dbReference type="InterPro" id="IPR003439">
    <property type="entry name" value="ABC_transporter-like_ATP-bd"/>
</dbReference>
<dbReference type="InterPro" id="IPR017871">
    <property type="entry name" value="ABC_transporter-like_CS"/>
</dbReference>
<dbReference type="InterPro" id="IPR045865">
    <property type="entry name" value="ACT-like_dom_sf"/>
</dbReference>
<dbReference type="InterPro" id="IPR050086">
    <property type="entry name" value="MetN_ABC_transporter-like"/>
</dbReference>
<dbReference type="InterPro" id="IPR018449">
    <property type="entry name" value="NIL_domain"/>
</dbReference>
<dbReference type="InterPro" id="IPR027417">
    <property type="entry name" value="P-loop_NTPase"/>
</dbReference>
<dbReference type="PANTHER" id="PTHR43166">
    <property type="entry name" value="AMINO ACID IMPORT ATP-BINDING PROTEIN"/>
    <property type="match status" value="1"/>
</dbReference>
<dbReference type="PANTHER" id="PTHR43166:SF30">
    <property type="entry name" value="METHIONINE IMPORT ATP-BINDING PROTEIN METN"/>
    <property type="match status" value="1"/>
</dbReference>
<dbReference type="Pfam" id="PF00005">
    <property type="entry name" value="ABC_tran"/>
    <property type="match status" value="1"/>
</dbReference>
<dbReference type="Pfam" id="PF09383">
    <property type="entry name" value="NIL"/>
    <property type="match status" value="1"/>
</dbReference>
<dbReference type="SMART" id="SM00382">
    <property type="entry name" value="AAA"/>
    <property type="match status" value="1"/>
</dbReference>
<dbReference type="SMART" id="SM00930">
    <property type="entry name" value="NIL"/>
    <property type="match status" value="1"/>
</dbReference>
<dbReference type="SUPFAM" id="SSF55021">
    <property type="entry name" value="ACT-like"/>
    <property type="match status" value="1"/>
</dbReference>
<dbReference type="SUPFAM" id="SSF52540">
    <property type="entry name" value="P-loop containing nucleoside triphosphate hydrolases"/>
    <property type="match status" value="1"/>
</dbReference>
<dbReference type="PROSITE" id="PS00211">
    <property type="entry name" value="ABC_TRANSPORTER_1"/>
    <property type="match status" value="1"/>
</dbReference>
<dbReference type="PROSITE" id="PS50893">
    <property type="entry name" value="ABC_TRANSPORTER_2"/>
    <property type="match status" value="1"/>
</dbReference>
<dbReference type="PROSITE" id="PS51264">
    <property type="entry name" value="METN"/>
    <property type="match status" value="1"/>
</dbReference>
<organism>
    <name type="scientific">Salmonella enteritidis</name>
    <dbReference type="NCBI Taxonomy" id="149539"/>
    <lineage>
        <taxon>Bacteria</taxon>
        <taxon>Pseudomonadati</taxon>
        <taxon>Pseudomonadota</taxon>
        <taxon>Gammaproteobacteria</taxon>
        <taxon>Enterobacterales</taxon>
        <taxon>Enterobacteriaceae</taxon>
        <taxon>Salmonella</taxon>
    </lineage>
</organism>
<gene>
    <name evidence="1" type="primary">metN</name>
    <name type="synonym">sfbB</name>
</gene>
<proteinExistence type="inferred from homology"/>